<sequence length="55" mass="6339">MAKPTTIKIRLNSSAGTGHFYVTKKNARTMTEKMVVRKYDPVARKHVEYKEGKIK</sequence>
<accession>Q28T20</accession>
<keyword id="KW-1185">Reference proteome</keyword>
<keyword id="KW-0687">Ribonucleoprotein</keyword>
<keyword id="KW-0689">Ribosomal protein</keyword>
<protein>
    <recommendedName>
        <fullName evidence="1">Large ribosomal subunit protein bL33</fullName>
    </recommendedName>
    <alternativeName>
        <fullName evidence="2">50S ribosomal protein L33</fullName>
    </alternativeName>
</protein>
<comment type="similarity">
    <text evidence="1">Belongs to the bacterial ribosomal protein bL33 family.</text>
</comment>
<gene>
    <name evidence="1" type="primary">rpmG</name>
    <name type="ordered locus">Jann_1225</name>
</gene>
<proteinExistence type="inferred from homology"/>
<name>RL33_JANSC</name>
<feature type="chain" id="PRO_0000356487" description="Large ribosomal subunit protein bL33">
    <location>
        <begin position="1"/>
        <end position="55"/>
    </location>
</feature>
<dbReference type="EMBL" id="CP000264">
    <property type="protein sequence ID" value="ABD54142.1"/>
    <property type="molecule type" value="Genomic_DNA"/>
</dbReference>
<dbReference type="RefSeq" id="WP_011454349.1">
    <property type="nucleotide sequence ID" value="NC_007802.1"/>
</dbReference>
<dbReference type="SMR" id="Q28T20"/>
<dbReference type="STRING" id="290400.Jann_1225"/>
<dbReference type="GeneID" id="72438407"/>
<dbReference type="KEGG" id="jan:Jann_1225"/>
<dbReference type="eggNOG" id="COG0267">
    <property type="taxonomic scope" value="Bacteria"/>
</dbReference>
<dbReference type="HOGENOM" id="CLU_190949_1_1_5"/>
<dbReference type="OrthoDB" id="21586at2"/>
<dbReference type="Proteomes" id="UP000008326">
    <property type="component" value="Chromosome"/>
</dbReference>
<dbReference type="GO" id="GO:0022625">
    <property type="term" value="C:cytosolic large ribosomal subunit"/>
    <property type="evidence" value="ECO:0007669"/>
    <property type="project" value="TreeGrafter"/>
</dbReference>
<dbReference type="GO" id="GO:0003735">
    <property type="term" value="F:structural constituent of ribosome"/>
    <property type="evidence" value="ECO:0007669"/>
    <property type="project" value="InterPro"/>
</dbReference>
<dbReference type="GO" id="GO:0006412">
    <property type="term" value="P:translation"/>
    <property type="evidence" value="ECO:0007669"/>
    <property type="project" value="UniProtKB-UniRule"/>
</dbReference>
<dbReference type="Gene3D" id="2.20.28.120">
    <property type="entry name" value="Ribosomal protein L33"/>
    <property type="match status" value="1"/>
</dbReference>
<dbReference type="HAMAP" id="MF_00294">
    <property type="entry name" value="Ribosomal_bL33"/>
    <property type="match status" value="1"/>
</dbReference>
<dbReference type="InterPro" id="IPR001705">
    <property type="entry name" value="Ribosomal_bL33"/>
</dbReference>
<dbReference type="InterPro" id="IPR018264">
    <property type="entry name" value="Ribosomal_bL33_CS"/>
</dbReference>
<dbReference type="InterPro" id="IPR038584">
    <property type="entry name" value="Ribosomal_bL33_sf"/>
</dbReference>
<dbReference type="InterPro" id="IPR011332">
    <property type="entry name" value="Ribosomal_zn-bd"/>
</dbReference>
<dbReference type="NCBIfam" id="NF001860">
    <property type="entry name" value="PRK00595.1"/>
    <property type="match status" value="1"/>
</dbReference>
<dbReference type="NCBIfam" id="TIGR01023">
    <property type="entry name" value="rpmG_bact"/>
    <property type="match status" value="1"/>
</dbReference>
<dbReference type="PANTHER" id="PTHR15238">
    <property type="entry name" value="54S RIBOSOMAL PROTEIN L39, MITOCHONDRIAL"/>
    <property type="match status" value="1"/>
</dbReference>
<dbReference type="PANTHER" id="PTHR15238:SF1">
    <property type="entry name" value="LARGE RIBOSOMAL SUBUNIT PROTEIN BL33M"/>
    <property type="match status" value="1"/>
</dbReference>
<dbReference type="Pfam" id="PF00471">
    <property type="entry name" value="Ribosomal_L33"/>
    <property type="match status" value="1"/>
</dbReference>
<dbReference type="SUPFAM" id="SSF57829">
    <property type="entry name" value="Zn-binding ribosomal proteins"/>
    <property type="match status" value="1"/>
</dbReference>
<dbReference type="PROSITE" id="PS00582">
    <property type="entry name" value="RIBOSOMAL_L33"/>
    <property type="match status" value="1"/>
</dbReference>
<organism>
    <name type="scientific">Jannaschia sp. (strain CCS1)</name>
    <dbReference type="NCBI Taxonomy" id="290400"/>
    <lineage>
        <taxon>Bacteria</taxon>
        <taxon>Pseudomonadati</taxon>
        <taxon>Pseudomonadota</taxon>
        <taxon>Alphaproteobacteria</taxon>
        <taxon>Rhodobacterales</taxon>
        <taxon>Roseobacteraceae</taxon>
        <taxon>Jannaschia</taxon>
    </lineage>
</organism>
<reference key="1">
    <citation type="submission" date="2006-02" db="EMBL/GenBank/DDBJ databases">
        <title>Complete sequence of chromosome of Jannaschia sp. CCS1.</title>
        <authorList>
            <consortium name="US DOE Joint Genome Institute"/>
            <person name="Copeland A."/>
            <person name="Lucas S."/>
            <person name="Lapidus A."/>
            <person name="Barry K."/>
            <person name="Detter J.C."/>
            <person name="Glavina del Rio T."/>
            <person name="Hammon N."/>
            <person name="Israni S."/>
            <person name="Pitluck S."/>
            <person name="Brettin T."/>
            <person name="Bruce D."/>
            <person name="Han C."/>
            <person name="Tapia R."/>
            <person name="Gilna P."/>
            <person name="Chertkov O."/>
            <person name="Saunders E."/>
            <person name="Schmutz J."/>
            <person name="Larimer F."/>
            <person name="Land M."/>
            <person name="Kyrpides N."/>
            <person name="Lykidis A."/>
            <person name="Moran M.A."/>
            <person name="Belas R."/>
            <person name="Ye W."/>
            <person name="Buchan A."/>
            <person name="Gonzalez J.M."/>
            <person name="Schell M.A."/>
            <person name="Richardson P."/>
        </authorList>
    </citation>
    <scope>NUCLEOTIDE SEQUENCE [LARGE SCALE GENOMIC DNA]</scope>
    <source>
        <strain>CCS1</strain>
    </source>
</reference>
<evidence type="ECO:0000255" key="1">
    <source>
        <dbReference type="HAMAP-Rule" id="MF_00294"/>
    </source>
</evidence>
<evidence type="ECO:0000305" key="2"/>